<keyword id="KW-0238">DNA-binding</keyword>
<accession>Q932A8</accession>
<comment type="subunit">
    <text evidence="1">Homotetramer.</text>
</comment>
<protein>
    <recommendedName>
        <fullName evidence="1">Single-stranded DNA-binding protein 2</fullName>
        <shortName evidence="1">SSB 2</shortName>
    </recommendedName>
</protein>
<evidence type="ECO:0000255" key="1">
    <source>
        <dbReference type="HAMAP-Rule" id="MF_00984"/>
    </source>
</evidence>
<evidence type="ECO:0000256" key="2">
    <source>
        <dbReference type="SAM" id="MobiDB-lite"/>
    </source>
</evidence>
<organism>
    <name type="scientific">Staphylococcus aureus (strain Mu50 / ATCC 700699)</name>
    <dbReference type="NCBI Taxonomy" id="158878"/>
    <lineage>
        <taxon>Bacteria</taxon>
        <taxon>Bacillati</taxon>
        <taxon>Bacillota</taxon>
        <taxon>Bacilli</taxon>
        <taxon>Bacillales</taxon>
        <taxon>Staphylococcaceae</taxon>
        <taxon>Staphylococcus</taxon>
    </lineage>
</organism>
<feature type="chain" id="PRO_0000096098" description="Single-stranded DNA-binding protein 2">
    <location>
        <begin position="1"/>
        <end position="141"/>
    </location>
</feature>
<feature type="domain" description="SSB" evidence="1">
    <location>
        <begin position="1"/>
        <end position="104"/>
    </location>
</feature>
<feature type="region of interest" description="Disordered" evidence="2">
    <location>
        <begin position="104"/>
        <end position="141"/>
    </location>
</feature>
<feature type="compositionally biased region" description="Low complexity" evidence="2">
    <location>
        <begin position="107"/>
        <end position="127"/>
    </location>
</feature>
<sequence>MLNRTVLVGRLTKDPELRSTPNGVNVGTFTLAVNRTFTNAQGEREADFINVVVFKKQAENVKNYLSKGSLAGVDGRLQTRNYENKDGQRVFVTEVVADSVQFLEPKNNNQQQNNNYQQQRQTQTGNNPFDNNADSIEDLPF</sequence>
<proteinExistence type="inferred from homology"/>
<gene>
    <name type="primary">ssb-p</name>
    <name type="ordered locus">SAV0864</name>
</gene>
<reference key="1">
    <citation type="journal article" date="2001" name="Lancet">
        <title>Whole genome sequencing of meticillin-resistant Staphylococcus aureus.</title>
        <authorList>
            <person name="Kuroda M."/>
            <person name="Ohta T."/>
            <person name="Uchiyama I."/>
            <person name="Baba T."/>
            <person name="Yuzawa H."/>
            <person name="Kobayashi I."/>
            <person name="Cui L."/>
            <person name="Oguchi A."/>
            <person name="Aoki K."/>
            <person name="Nagai Y."/>
            <person name="Lian J.-Q."/>
            <person name="Ito T."/>
            <person name="Kanamori M."/>
            <person name="Matsumaru H."/>
            <person name="Maruyama A."/>
            <person name="Murakami H."/>
            <person name="Hosoyama A."/>
            <person name="Mizutani-Ui Y."/>
            <person name="Takahashi N.K."/>
            <person name="Sawano T."/>
            <person name="Inoue R."/>
            <person name="Kaito C."/>
            <person name="Sekimizu K."/>
            <person name="Hirakawa H."/>
            <person name="Kuhara S."/>
            <person name="Goto S."/>
            <person name="Yabuzaki J."/>
            <person name="Kanehisa M."/>
            <person name="Yamashita A."/>
            <person name="Oshima K."/>
            <person name="Furuya K."/>
            <person name="Yoshino C."/>
            <person name="Shiba T."/>
            <person name="Hattori M."/>
            <person name="Ogasawara N."/>
            <person name="Hayashi H."/>
            <person name="Hiramatsu K."/>
        </authorList>
    </citation>
    <scope>NUCLEOTIDE SEQUENCE [LARGE SCALE GENOMIC DNA]</scope>
    <source>
        <strain>Mu50 / ATCC 700699</strain>
    </source>
</reference>
<dbReference type="EMBL" id="BA000017">
    <property type="protein sequence ID" value="BAB57026.1"/>
    <property type="molecule type" value="Genomic_DNA"/>
</dbReference>
<dbReference type="RefSeq" id="WP_000934774.1">
    <property type="nucleotide sequence ID" value="NC_002758.2"/>
</dbReference>
<dbReference type="SMR" id="Q932A8"/>
<dbReference type="KEGG" id="sav:SAV0864"/>
<dbReference type="HOGENOM" id="CLU_078758_6_1_9"/>
<dbReference type="PhylomeDB" id="Q932A8"/>
<dbReference type="Proteomes" id="UP000002481">
    <property type="component" value="Chromosome"/>
</dbReference>
<dbReference type="GO" id="GO:0009295">
    <property type="term" value="C:nucleoid"/>
    <property type="evidence" value="ECO:0007669"/>
    <property type="project" value="TreeGrafter"/>
</dbReference>
<dbReference type="GO" id="GO:0003697">
    <property type="term" value="F:single-stranded DNA binding"/>
    <property type="evidence" value="ECO:0007669"/>
    <property type="project" value="UniProtKB-UniRule"/>
</dbReference>
<dbReference type="GO" id="GO:0006260">
    <property type="term" value="P:DNA replication"/>
    <property type="evidence" value="ECO:0007669"/>
    <property type="project" value="InterPro"/>
</dbReference>
<dbReference type="CDD" id="cd04496">
    <property type="entry name" value="SSB_OBF"/>
    <property type="match status" value="1"/>
</dbReference>
<dbReference type="FunFam" id="2.40.50.140:FF:000084">
    <property type="entry name" value="Single-stranded DNA-binding protein"/>
    <property type="match status" value="1"/>
</dbReference>
<dbReference type="Gene3D" id="2.40.50.140">
    <property type="entry name" value="Nucleic acid-binding proteins"/>
    <property type="match status" value="1"/>
</dbReference>
<dbReference type="HAMAP" id="MF_00984">
    <property type="entry name" value="SSB"/>
    <property type="match status" value="1"/>
</dbReference>
<dbReference type="InterPro" id="IPR012340">
    <property type="entry name" value="NA-bd_OB-fold"/>
</dbReference>
<dbReference type="InterPro" id="IPR000424">
    <property type="entry name" value="Primosome_PriB/ssb"/>
</dbReference>
<dbReference type="InterPro" id="IPR011344">
    <property type="entry name" value="ssDNA-bd"/>
</dbReference>
<dbReference type="NCBIfam" id="TIGR00621">
    <property type="entry name" value="ssb"/>
    <property type="match status" value="1"/>
</dbReference>
<dbReference type="PANTHER" id="PTHR10302">
    <property type="entry name" value="SINGLE-STRANDED DNA-BINDING PROTEIN"/>
    <property type="match status" value="1"/>
</dbReference>
<dbReference type="PANTHER" id="PTHR10302:SF27">
    <property type="entry name" value="SINGLE-STRANDED DNA-BINDING PROTEIN"/>
    <property type="match status" value="1"/>
</dbReference>
<dbReference type="Pfam" id="PF00436">
    <property type="entry name" value="SSB"/>
    <property type="match status" value="1"/>
</dbReference>
<dbReference type="PIRSF" id="PIRSF002070">
    <property type="entry name" value="SSB"/>
    <property type="match status" value="1"/>
</dbReference>
<dbReference type="SUPFAM" id="SSF50249">
    <property type="entry name" value="Nucleic acid-binding proteins"/>
    <property type="match status" value="1"/>
</dbReference>
<dbReference type="PROSITE" id="PS50935">
    <property type="entry name" value="SSB"/>
    <property type="match status" value="1"/>
</dbReference>
<name>SSB2_STAAM</name>